<name>DEFLO_HAELO</name>
<sequence>MAESTTTCFLLLVTGYVTAVMSEEAHLRSRRDFGCGQGMIFMCQRRCMRLYPGSTGFCRGFRCMCDTHIPLRPPFMVG</sequence>
<gene>
    <name evidence="6" type="primary">sGDLP</name>
</gene>
<feature type="signal peptide" evidence="2">
    <location>
        <begin position="1"/>
        <end position="22"/>
    </location>
</feature>
<feature type="propeptide" id="PRO_0000403320" evidence="2 3">
    <location>
        <begin position="23"/>
        <end position="29"/>
    </location>
</feature>
<feature type="chain" id="PRO_5000365774" description="Longicornsin" evidence="3">
    <location>
        <begin position="32"/>
        <end position="78"/>
    </location>
</feature>
<feature type="disulfide bond" evidence="1">
    <location>
        <begin position="35"/>
        <end position="58"/>
    </location>
</feature>
<feature type="disulfide bond" evidence="1">
    <location>
        <begin position="43"/>
        <end position="63"/>
    </location>
</feature>
<feature type="disulfide bond" evidence="1">
    <location>
        <begin position="47"/>
        <end position="65"/>
    </location>
</feature>
<proteinExistence type="evidence at protein level"/>
<reference evidence="5 6" key="1">
    <citation type="journal article" date="2010" name="Protein Sci.">
        <title>A novel defensin-like peptide from salivary glands of the hard tick, Haemaphysalis longicornis.</title>
        <authorList>
            <person name="Lu X."/>
            <person name="Che Q."/>
            <person name="Lv Y."/>
            <person name="Wang M."/>
            <person name="Lu Z."/>
            <person name="Feng F."/>
            <person name="Liu J."/>
            <person name="Yu H."/>
        </authorList>
    </citation>
    <scope>NUCLEOTIDE SEQUENCE [MRNA]</scope>
    <scope>PROTEIN SEQUENCE OF 32-78</scope>
    <scope>FUNCTION</scope>
    <scope>TISSUE SPECIFICITY</scope>
    <scope>MASS SPECTROMETRY</scope>
    <source>
        <tissue evidence="6">Salivary gland</tissue>
    </source>
</reference>
<organism>
    <name type="scientific">Haemaphysalis longicornis</name>
    <name type="common">Bush tick</name>
    <dbReference type="NCBI Taxonomy" id="44386"/>
    <lineage>
        <taxon>Eukaryota</taxon>
        <taxon>Metazoa</taxon>
        <taxon>Ecdysozoa</taxon>
        <taxon>Arthropoda</taxon>
        <taxon>Chelicerata</taxon>
        <taxon>Arachnida</taxon>
        <taxon>Acari</taxon>
        <taxon>Parasitiformes</taxon>
        <taxon>Ixodida</taxon>
        <taxon>Ixodoidea</taxon>
        <taxon>Ixodidae</taxon>
        <taxon>Haemaphysalinae</taxon>
        <taxon>Haemaphysalis</taxon>
    </lineage>
</organism>
<keyword id="KW-0044">Antibiotic</keyword>
<keyword id="KW-0929">Antimicrobial</keyword>
<keyword id="KW-0165">Cleavage on pair of basic residues</keyword>
<keyword id="KW-0204">Cytolysis</keyword>
<keyword id="KW-0211">Defensin</keyword>
<keyword id="KW-0903">Direct protein sequencing</keyword>
<keyword id="KW-1015">Disulfide bond</keyword>
<keyword id="KW-0295">Fungicide</keyword>
<keyword id="KW-0354">Hemolysis</keyword>
<keyword id="KW-0391">Immunity</keyword>
<keyword id="KW-0399">Innate immunity</keyword>
<keyword id="KW-0964">Secreted</keyword>
<keyword id="KW-0732">Signal</keyword>
<evidence type="ECO:0000250" key="1">
    <source>
        <dbReference type="UniProtKB" id="P80571"/>
    </source>
</evidence>
<evidence type="ECO:0000255" key="2"/>
<evidence type="ECO:0000269" key="3">
    <source>
    </source>
</evidence>
<evidence type="ECO:0000303" key="4">
    <source>
    </source>
</evidence>
<evidence type="ECO:0000305" key="5"/>
<evidence type="ECO:0000312" key="6">
    <source>
        <dbReference type="EMBL" id="ACC95997.1"/>
    </source>
</evidence>
<accession>B2MW54</accession>
<dbReference type="EMBL" id="EU627689">
    <property type="protein sequence ID" value="ACC95997.1"/>
    <property type="molecule type" value="mRNA"/>
</dbReference>
<dbReference type="GO" id="GO:0005576">
    <property type="term" value="C:extracellular region"/>
    <property type="evidence" value="ECO:0007669"/>
    <property type="project" value="UniProtKB-SubCell"/>
</dbReference>
<dbReference type="GO" id="GO:0042742">
    <property type="term" value="P:defense response to bacterium"/>
    <property type="evidence" value="ECO:0007669"/>
    <property type="project" value="UniProtKB-KW"/>
</dbReference>
<dbReference type="GO" id="GO:0050832">
    <property type="term" value="P:defense response to fungus"/>
    <property type="evidence" value="ECO:0007669"/>
    <property type="project" value="UniProtKB-KW"/>
</dbReference>
<dbReference type="GO" id="GO:0045087">
    <property type="term" value="P:innate immune response"/>
    <property type="evidence" value="ECO:0007669"/>
    <property type="project" value="UniProtKB-KW"/>
</dbReference>
<dbReference type="GO" id="GO:0031640">
    <property type="term" value="P:killing of cells of another organism"/>
    <property type="evidence" value="ECO:0007669"/>
    <property type="project" value="UniProtKB-KW"/>
</dbReference>
<protein>
    <recommendedName>
        <fullName evidence="4 6">Longicornsin</fullName>
    </recommendedName>
</protein>
<comment type="function">
    <text evidence="3">Has antibacterial activity against the Gram-positive bacteria S.aureus ATCC2592 (MIC=0.8 ug/ml), S.aureus 6A (MIC=0.8 ug/ml) and S.aureus 15A (MIC=1.6 ug/ml), and against the Gram-negative bacteria E.coli ATCC 25922 (MIC=3.2 ug/ml), E.coli 23A (MIC=6.4 ug/ml), E.coli 27A (MIC=6.4 ug/ml), P.aeruginosa 3A (MIC=3.2 ug/ml), P.aeruginosa 7A (MIC=0.8 ug/ml) and H.pylori NCTC11637 (MIC=6.4 ug/ml). Has antifungal activity against C.albidus ATCC2002 (MIC=25.6 ug/ml). Very low hemolytic activity against rabbit erythrocytes.</text>
</comment>
<comment type="subcellular location">
    <subcellularLocation>
        <location evidence="1">Secreted</location>
    </subcellularLocation>
</comment>
<comment type="tissue specificity">
    <text evidence="3">Salivary glands (at protein level).</text>
</comment>
<comment type="mass spectrometry"/>
<comment type="similarity">
    <text evidence="2">Belongs to the invertebrate defensin family. Type 2 subfamily.</text>
</comment>